<sequence length="438" mass="48646">MADARGSSSSSGDGGGGEGKGGAGHGDFVGGGQHNWYHGILGAVPPPNVGRQNIVHHQYPAASLIQQHHQSPTMPLPMAQLPYVPQYTVLPTPAVLPSHHHHHGQSQISQENFQDWVPSNNVAAPHVPSAFQDWRQMCNGSAFMPFGQTAANSNVFYQNLTFNSWTSNNMPRNPVYTSFHPAAIEDHHAPLFHSNNHDIDPGFQTNFRMDQAFVPASSPFPPVSSSSHSFSSAKISNGPTYTKKAKKSNVKDPPIVFRRSDMESEKNDDNPDQTPVSEPPSMNQNGENLIIRFNCREYRVILRKELTNSDVGNIGRIVMPKRDAEAHLPALHQREGVTLKMDDFKFETTWNFKYRFWPNNKSRMYVLESTGGFVKHHGLQTGDIFIIYKSSESGKFVVRGEKAIKPNAIMPVVDCSCKNELNKSEECGFTISLQTKKT</sequence>
<proteinExistence type="inferred from homology"/>
<feature type="chain" id="PRO_0000376966" description="Putative B3 domain-containing protein Os04g0676650">
    <location>
        <begin position="1"/>
        <end position="438"/>
    </location>
</feature>
<feature type="DNA-binding region" description="TF-B3" evidence="1">
    <location>
        <begin position="302"/>
        <end position="404"/>
    </location>
</feature>
<feature type="region of interest" description="Disordered" evidence="2">
    <location>
        <begin position="1"/>
        <end position="30"/>
    </location>
</feature>
<feature type="region of interest" description="Disordered" evidence="2">
    <location>
        <begin position="225"/>
        <end position="285"/>
    </location>
</feature>
<feature type="compositionally biased region" description="Low complexity" evidence="2">
    <location>
        <begin position="1"/>
        <end position="11"/>
    </location>
</feature>
<feature type="compositionally biased region" description="Gly residues" evidence="2">
    <location>
        <begin position="12"/>
        <end position="30"/>
    </location>
</feature>
<feature type="compositionally biased region" description="Basic and acidic residues" evidence="2">
    <location>
        <begin position="258"/>
        <end position="269"/>
    </location>
</feature>
<feature type="compositionally biased region" description="Polar residues" evidence="2">
    <location>
        <begin position="272"/>
        <end position="285"/>
    </location>
</feature>
<protein>
    <recommendedName>
        <fullName>Putative B3 domain-containing protein Os04g0676650</fullName>
    </recommendedName>
</protein>
<accession>Q7XKC4</accession>
<accession>A0A0P0WGB4</accession>
<keyword id="KW-0238">DNA-binding</keyword>
<keyword id="KW-0539">Nucleus</keyword>
<keyword id="KW-1185">Reference proteome</keyword>
<keyword id="KW-0804">Transcription</keyword>
<keyword id="KW-0805">Transcription regulation</keyword>
<evidence type="ECO:0000255" key="1">
    <source>
        <dbReference type="PROSITE-ProRule" id="PRU00326"/>
    </source>
</evidence>
<evidence type="ECO:0000256" key="2">
    <source>
        <dbReference type="SAM" id="MobiDB-lite"/>
    </source>
</evidence>
<dbReference type="EMBL" id="AL606668">
    <property type="protein sequence ID" value="CAE05756.1"/>
    <property type="molecule type" value="Genomic_DNA"/>
</dbReference>
<dbReference type="EMBL" id="AP014960">
    <property type="protein sequence ID" value="BAS91626.1"/>
    <property type="molecule type" value="Genomic_DNA"/>
</dbReference>
<dbReference type="RefSeq" id="XP_015635176.1">
    <property type="nucleotide sequence ID" value="XM_015779690.1"/>
</dbReference>
<dbReference type="RefSeq" id="XP_015635177.1">
    <property type="nucleotide sequence ID" value="XM_015779691.1"/>
</dbReference>
<dbReference type="SMR" id="Q7XKC4"/>
<dbReference type="FunCoup" id="Q7XKC4">
    <property type="interactions" value="26"/>
</dbReference>
<dbReference type="PaxDb" id="39947-Q7XKC4"/>
<dbReference type="EnsemblPlants" id="Os04t0676650-00">
    <property type="protein sequence ID" value="Os04t0676650-00"/>
    <property type="gene ID" value="Os04g0676650"/>
</dbReference>
<dbReference type="Gramene" id="Os04t0676650-00">
    <property type="protein sequence ID" value="Os04t0676650-00"/>
    <property type="gene ID" value="Os04g0676650"/>
</dbReference>
<dbReference type="eggNOG" id="ENOG502S3BX">
    <property type="taxonomic scope" value="Eukaryota"/>
</dbReference>
<dbReference type="HOGENOM" id="CLU_025764_0_0_1"/>
<dbReference type="InParanoid" id="Q7XKC4"/>
<dbReference type="OMA" id="AISHEQY"/>
<dbReference type="OrthoDB" id="757982at2759"/>
<dbReference type="Proteomes" id="UP000000763">
    <property type="component" value="Chromosome 4"/>
</dbReference>
<dbReference type="Proteomes" id="UP000059680">
    <property type="component" value="Chromosome 4"/>
</dbReference>
<dbReference type="GO" id="GO:0005634">
    <property type="term" value="C:nucleus"/>
    <property type="evidence" value="ECO:0007669"/>
    <property type="project" value="UniProtKB-SubCell"/>
</dbReference>
<dbReference type="GO" id="GO:0003677">
    <property type="term" value="F:DNA binding"/>
    <property type="evidence" value="ECO:0007669"/>
    <property type="project" value="UniProtKB-KW"/>
</dbReference>
<dbReference type="GO" id="GO:0003700">
    <property type="term" value="F:DNA-binding transcription factor activity"/>
    <property type="evidence" value="ECO:0007669"/>
    <property type="project" value="InterPro"/>
</dbReference>
<dbReference type="CDD" id="cd10017">
    <property type="entry name" value="B3_DNA"/>
    <property type="match status" value="1"/>
</dbReference>
<dbReference type="FunFam" id="2.40.330.10:FF:000003">
    <property type="entry name" value="B3 domain-containing transcription factor FUS3"/>
    <property type="match status" value="1"/>
</dbReference>
<dbReference type="Gene3D" id="2.40.330.10">
    <property type="entry name" value="DNA-binding pseudobarrel domain"/>
    <property type="match status" value="1"/>
</dbReference>
<dbReference type="InterPro" id="IPR003340">
    <property type="entry name" value="B3_DNA-bd"/>
</dbReference>
<dbReference type="InterPro" id="IPR015300">
    <property type="entry name" value="DNA-bd_pseudobarrel_sf"/>
</dbReference>
<dbReference type="InterPro" id="IPR044800">
    <property type="entry name" value="LEC2-like"/>
</dbReference>
<dbReference type="PANTHER" id="PTHR31140:SF12">
    <property type="entry name" value="B3 DOMAIN-CONTAINING PROTEIN OS04G0676650-RELATED"/>
    <property type="match status" value="1"/>
</dbReference>
<dbReference type="PANTHER" id="PTHR31140">
    <property type="entry name" value="B3 DOMAIN-CONTAINING TRANSCRIPTION FACTOR ABI3"/>
    <property type="match status" value="1"/>
</dbReference>
<dbReference type="Pfam" id="PF02362">
    <property type="entry name" value="B3"/>
    <property type="match status" value="1"/>
</dbReference>
<dbReference type="SMART" id="SM01019">
    <property type="entry name" value="B3"/>
    <property type="match status" value="1"/>
</dbReference>
<dbReference type="SUPFAM" id="SSF101936">
    <property type="entry name" value="DNA-binding pseudobarrel domain"/>
    <property type="match status" value="1"/>
</dbReference>
<dbReference type="PROSITE" id="PS50863">
    <property type="entry name" value="B3"/>
    <property type="match status" value="1"/>
</dbReference>
<comment type="subcellular location">
    <subcellularLocation>
        <location evidence="1">Nucleus</location>
    </subcellularLocation>
</comment>
<organism>
    <name type="scientific">Oryza sativa subsp. japonica</name>
    <name type="common">Rice</name>
    <dbReference type="NCBI Taxonomy" id="39947"/>
    <lineage>
        <taxon>Eukaryota</taxon>
        <taxon>Viridiplantae</taxon>
        <taxon>Streptophyta</taxon>
        <taxon>Embryophyta</taxon>
        <taxon>Tracheophyta</taxon>
        <taxon>Spermatophyta</taxon>
        <taxon>Magnoliopsida</taxon>
        <taxon>Liliopsida</taxon>
        <taxon>Poales</taxon>
        <taxon>Poaceae</taxon>
        <taxon>BOP clade</taxon>
        <taxon>Oryzoideae</taxon>
        <taxon>Oryzeae</taxon>
        <taxon>Oryzinae</taxon>
        <taxon>Oryza</taxon>
        <taxon>Oryza sativa</taxon>
    </lineage>
</organism>
<gene>
    <name type="ordered locus">Os04g0676650</name>
    <name type="ordered locus">Os04g0676500</name>
    <name type="ordered locus">LOC_Os04g58010</name>
    <name type="ORF">OSJNBa0064G10.7</name>
</gene>
<name>Y4765_ORYSJ</name>
<reference key="1">
    <citation type="journal article" date="2002" name="Nature">
        <title>Sequence and analysis of rice chromosome 4.</title>
        <authorList>
            <person name="Feng Q."/>
            <person name="Zhang Y."/>
            <person name="Hao P."/>
            <person name="Wang S."/>
            <person name="Fu G."/>
            <person name="Huang Y."/>
            <person name="Li Y."/>
            <person name="Zhu J."/>
            <person name="Liu Y."/>
            <person name="Hu X."/>
            <person name="Jia P."/>
            <person name="Zhang Y."/>
            <person name="Zhao Q."/>
            <person name="Ying K."/>
            <person name="Yu S."/>
            <person name="Tang Y."/>
            <person name="Weng Q."/>
            <person name="Zhang L."/>
            <person name="Lu Y."/>
            <person name="Mu J."/>
            <person name="Lu Y."/>
            <person name="Zhang L.S."/>
            <person name="Yu Z."/>
            <person name="Fan D."/>
            <person name="Liu X."/>
            <person name="Lu T."/>
            <person name="Li C."/>
            <person name="Wu Y."/>
            <person name="Sun T."/>
            <person name="Lei H."/>
            <person name="Li T."/>
            <person name="Hu H."/>
            <person name="Guan J."/>
            <person name="Wu M."/>
            <person name="Zhang R."/>
            <person name="Zhou B."/>
            <person name="Chen Z."/>
            <person name="Chen L."/>
            <person name="Jin Z."/>
            <person name="Wang R."/>
            <person name="Yin H."/>
            <person name="Cai Z."/>
            <person name="Ren S."/>
            <person name="Lv G."/>
            <person name="Gu W."/>
            <person name="Zhu G."/>
            <person name="Tu Y."/>
            <person name="Jia J."/>
            <person name="Zhang Y."/>
            <person name="Chen J."/>
            <person name="Kang H."/>
            <person name="Chen X."/>
            <person name="Shao C."/>
            <person name="Sun Y."/>
            <person name="Hu Q."/>
            <person name="Zhang X."/>
            <person name="Zhang W."/>
            <person name="Wang L."/>
            <person name="Ding C."/>
            <person name="Sheng H."/>
            <person name="Gu J."/>
            <person name="Chen S."/>
            <person name="Ni L."/>
            <person name="Zhu F."/>
            <person name="Chen W."/>
            <person name="Lan L."/>
            <person name="Lai Y."/>
            <person name="Cheng Z."/>
            <person name="Gu M."/>
            <person name="Jiang J."/>
            <person name="Li J."/>
            <person name="Hong G."/>
            <person name="Xue Y."/>
            <person name="Han B."/>
        </authorList>
    </citation>
    <scope>NUCLEOTIDE SEQUENCE [LARGE SCALE GENOMIC DNA]</scope>
    <source>
        <strain>cv. Nipponbare</strain>
    </source>
</reference>
<reference key="2">
    <citation type="journal article" date="2005" name="Nature">
        <title>The map-based sequence of the rice genome.</title>
        <authorList>
            <consortium name="International rice genome sequencing project (IRGSP)"/>
        </authorList>
    </citation>
    <scope>NUCLEOTIDE SEQUENCE [LARGE SCALE GENOMIC DNA]</scope>
    <source>
        <strain>cv. Nipponbare</strain>
    </source>
</reference>
<reference key="3">
    <citation type="journal article" date="2013" name="Rice">
        <title>Improvement of the Oryza sativa Nipponbare reference genome using next generation sequence and optical map data.</title>
        <authorList>
            <person name="Kawahara Y."/>
            <person name="de la Bastide M."/>
            <person name="Hamilton J.P."/>
            <person name="Kanamori H."/>
            <person name="McCombie W.R."/>
            <person name="Ouyang S."/>
            <person name="Schwartz D.C."/>
            <person name="Tanaka T."/>
            <person name="Wu J."/>
            <person name="Zhou S."/>
            <person name="Childs K.L."/>
            <person name="Davidson R.M."/>
            <person name="Lin H."/>
            <person name="Quesada-Ocampo L."/>
            <person name="Vaillancourt B."/>
            <person name="Sakai H."/>
            <person name="Lee S.S."/>
            <person name="Kim J."/>
            <person name="Numa H."/>
            <person name="Itoh T."/>
            <person name="Buell C.R."/>
            <person name="Matsumoto T."/>
        </authorList>
    </citation>
    <scope>GENOME REANNOTATION</scope>
    <source>
        <strain>cv. Nipponbare</strain>
    </source>
</reference>